<keyword id="KW-0067">ATP-binding</keyword>
<keyword id="KW-0963">Cytoplasm</keyword>
<keyword id="KW-0418">Kinase</keyword>
<keyword id="KW-0460">Magnesium</keyword>
<keyword id="KW-0479">Metal-binding</keyword>
<keyword id="KW-0546">Nucleotide metabolism</keyword>
<keyword id="KW-0547">Nucleotide-binding</keyword>
<keyword id="KW-0597">Phosphoprotein</keyword>
<keyword id="KW-1185">Reference proteome</keyword>
<keyword id="KW-0808">Transferase</keyword>
<sequence length="141" mass="15750">MAVERTLSIIKPDAVAKNIIGEIYSRFERNGLKIVASRMVRLSQADAEGFYAVHRERPFFNDLVKFMISGPVMVQVLEGEDAIRKNRDLMGATDPRKAEKGTIRADFAESIDANAVHGSDAPETAAVEIAYFFPELNIYTR</sequence>
<dbReference type="EC" id="2.7.4.6" evidence="1"/>
<dbReference type="EMBL" id="CP000103">
    <property type="protein sequence ID" value="ABB75669.1"/>
    <property type="molecule type" value="Genomic_DNA"/>
</dbReference>
<dbReference type="RefSeq" id="WP_011381670.1">
    <property type="nucleotide sequence ID" value="NC_007614.1"/>
</dbReference>
<dbReference type="SMR" id="Q2Y6F2"/>
<dbReference type="STRING" id="323848.Nmul_A2380"/>
<dbReference type="KEGG" id="nmu:Nmul_A2380"/>
<dbReference type="eggNOG" id="COG0105">
    <property type="taxonomic scope" value="Bacteria"/>
</dbReference>
<dbReference type="HOGENOM" id="CLU_060216_8_1_4"/>
<dbReference type="OrthoDB" id="9801161at2"/>
<dbReference type="Proteomes" id="UP000002718">
    <property type="component" value="Chromosome"/>
</dbReference>
<dbReference type="GO" id="GO:0005737">
    <property type="term" value="C:cytoplasm"/>
    <property type="evidence" value="ECO:0007669"/>
    <property type="project" value="UniProtKB-SubCell"/>
</dbReference>
<dbReference type="GO" id="GO:0005524">
    <property type="term" value="F:ATP binding"/>
    <property type="evidence" value="ECO:0007669"/>
    <property type="project" value="UniProtKB-UniRule"/>
</dbReference>
<dbReference type="GO" id="GO:0046872">
    <property type="term" value="F:metal ion binding"/>
    <property type="evidence" value="ECO:0007669"/>
    <property type="project" value="UniProtKB-KW"/>
</dbReference>
<dbReference type="GO" id="GO:0004550">
    <property type="term" value="F:nucleoside diphosphate kinase activity"/>
    <property type="evidence" value="ECO:0007669"/>
    <property type="project" value="UniProtKB-UniRule"/>
</dbReference>
<dbReference type="GO" id="GO:0006241">
    <property type="term" value="P:CTP biosynthetic process"/>
    <property type="evidence" value="ECO:0007669"/>
    <property type="project" value="UniProtKB-UniRule"/>
</dbReference>
<dbReference type="GO" id="GO:0006183">
    <property type="term" value="P:GTP biosynthetic process"/>
    <property type="evidence" value="ECO:0007669"/>
    <property type="project" value="UniProtKB-UniRule"/>
</dbReference>
<dbReference type="GO" id="GO:0006228">
    <property type="term" value="P:UTP biosynthetic process"/>
    <property type="evidence" value="ECO:0007669"/>
    <property type="project" value="UniProtKB-UniRule"/>
</dbReference>
<dbReference type="CDD" id="cd04413">
    <property type="entry name" value="NDPk_I"/>
    <property type="match status" value="1"/>
</dbReference>
<dbReference type="FunFam" id="3.30.70.141:FF:000001">
    <property type="entry name" value="Nucleoside diphosphate kinase"/>
    <property type="match status" value="1"/>
</dbReference>
<dbReference type="Gene3D" id="3.30.70.141">
    <property type="entry name" value="Nucleoside diphosphate kinase-like domain"/>
    <property type="match status" value="1"/>
</dbReference>
<dbReference type="HAMAP" id="MF_00451">
    <property type="entry name" value="NDP_kinase"/>
    <property type="match status" value="1"/>
</dbReference>
<dbReference type="InterPro" id="IPR034907">
    <property type="entry name" value="NDK-like_dom"/>
</dbReference>
<dbReference type="InterPro" id="IPR036850">
    <property type="entry name" value="NDK-like_dom_sf"/>
</dbReference>
<dbReference type="InterPro" id="IPR001564">
    <property type="entry name" value="Nucleoside_diP_kinase"/>
</dbReference>
<dbReference type="InterPro" id="IPR023005">
    <property type="entry name" value="Nucleoside_diP_kinase_AS"/>
</dbReference>
<dbReference type="NCBIfam" id="NF001908">
    <property type="entry name" value="PRK00668.1"/>
    <property type="match status" value="1"/>
</dbReference>
<dbReference type="PANTHER" id="PTHR46161">
    <property type="entry name" value="NUCLEOSIDE DIPHOSPHATE KINASE"/>
    <property type="match status" value="1"/>
</dbReference>
<dbReference type="PANTHER" id="PTHR46161:SF3">
    <property type="entry name" value="NUCLEOSIDE DIPHOSPHATE KINASE DDB_G0292928-RELATED"/>
    <property type="match status" value="1"/>
</dbReference>
<dbReference type="Pfam" id="PF00334">
    <property type="entry name" value="NDK"/>
    <property type="match status" value="1"/>
</dbReference>
<dbReference type="PRINTS" id="PR01243">
    <property type="entry name" value="NUCDPKINASE"/>
</dbReference>
<dbReference type="SMART" id="SM00562">
    <property type="entry name" value="NDK"/>
    <property type="match status" value="1"/>
</dbReference>
<dbReference type="SUPFAM" id="SSF54919">
    <property type="entry name" value="Nucleoside diphosphate kinase, NDK"/>
    <property type="match status" value="1"/>
</dbReference>
<dbReference type="PROSITE" id="PS00469">
    <property type="entry name" value="NDPK"/>
    <property type="match status" value="1"/>
</dbReference>
<dbReference type="PROSITE" id="PS51374">
    <property type="entry name" value="NDPK_LIKE"/>
    <property type="match status" value="1"/>
</dbReference>
<comment type="function">
    <text evidence="1">Major role in the synthesis of nucleoside triphosphates other than ATP. The ATP gamma phosphate is transferred to the NDP beta phosphate via a ping-pong mechanism, using a phosphorylated active-site intermediate.</text>
</comment>
<comment type="catalytic activity">
    <reaction evidence="1">
        <text>a 2'-deoxyribonucleoside 5'-diphosphate + ATP = a 2'-deoxyribonucleoside 5'-triphosphate + ADP</text>
        <dbReference type="Rhea" id="RHEA:44640"/>
        <dbReference type="ChEBI" id="CHEBI:30616"/>
        <dbReference type="ChEBI" id="CHEBI:61560"/>
        <dbReference type="ChEBI" id="CHEBI:73316"/>
        <dbReference type="ChEBI" id="CHEBI:456216"/>
        <dbReference type="EC" id="2.7.4.6"/>
    </reaction>
</comment>
<comment type="catalytic activity">
    <reaction evidence="1">
        <text>a ribonucleoside 5'-diphosphate + ATP = a ribonucleoside 5'-triphosphate + ADP</text>
        <dbReference type="Rhea" id="RHEA:18113"/>
        <dbReference type="ChEBI" id="CHEBI:30616"/>
        <dbReference type="ChEBI" id="CHEBI:57930"/>
        <dbReference type="ChEBI" id="CHEBI:61557"/>
        <dbReference type="ChEBI" id="CHEBI:456216"/>
        <dbReference type="EC" id="2.7.4.6"/>
    </reaction>
</comment>
<comment type="cofactor">
    <cofactor evidence="1">
        <name>Mg(2+)</name>
        <dbReference type="ChEBI" id="CHEBI:18420"/>
    </cofactor>
</comment>
<comment type="subunit">
    <text evidence="1">Homotetramer.</text>
</comment>
<comment type="subcellular location">
    <subcellularLocation>
        <location evidence="1">Cytoplasm</location>
    </subcellularLocation>
</comment>
<comment type="similarity">
    <text evidence="1">Belongs to the NDK family.</text>
</comment>
<feature type="chain" id="PRO_0000242504" description="Nucleoside diphosphate kinase">
    <location>
        <begin position="1"/>
        <end position="141"/>
    </location>
</feature>
<feature type="active site" description="Pros-phosphohistidine intermediate" evidence="1">
    <location>
        <position position="117"/>
    </location>
</feature>
<feature type="binding site" evidence="1">
    <location>
        <position position="11"/>
    </location>
    <ligand>
        <name>ATP</name>
        <dbReference type="ChEBI" id="CHEBI:30616"/>
    </ligand>
</feature>
<feature type="binding site" evidence="1">
    <location>
        <position position="59"/>
    </location>
    <ligand>
        <name>ATP</name>
        <dbReference type="ChEBI" id="CHEBI:30616"/>
    </ligand>
</feature>
<feature type="binding site" evidence="1">
    <location>
        <position position="87"/>
    </location>
    <ligand>
        <name>ATP</name>
        <dbReference type="ChEBI" id="CHEBI:30616"/>
    </ligand>
</feature>
<feature type="binding site" evidence="1">
    <location>
        <position position="93"/>
    </location>
    <ligand>
        <name>ATP</name>
        <dbReference type="ChEBI" id="CHEBI:30616"/>
    </ligand>
</feature>
<feature type="binding site" evidence="1">
    <location>
        <position position="104"/>
    </location>
    <ligand>
        <name>ATP</name>
        <dbReference type="ChEBI" id="CHEBI:30616"/>
    </ligand>
</feature>
<feature type="binding site" evidence="1">
    <location>
        <position position="114"/>
    </location>
    <ligand>
        <name>ATP</name>
        <dbReference type="ChEBI" id="CHEBI:30616"/>
    </ligand>
</feature>
<reference key="1">
    <citation type="submission" date="2005-08" db="EMBL/GenBank/DDBJ databases">
        <title>Complete sequence of chromosome 1 of Nitrosospira multiformis ATCC 25196.</title>
        <authorList>
            <person name="Copeland A."/>
            <person name="Lucas S."/>
            <person name="Lapidus A."/>
            <person name="Barry K."/>
            <person name="Detter J.C."/>
            <person name="Glavina T."/>
            <person name="Hammon N."/>
            <person name="Israni S."/>
            <person name="Pitluck S."/>
            <person name="Chain P."/>
            <person name="Malfatti S."/>
            <person name="Shin M."/>
            <person name="Vergez L."/>
            <person name="Schmutz J."/>
            <person name="Larimer F."/>
            <person name="Land M."/>
            <person name="Hauser L."/>
            <person name="Kyrpides N."/>
            <person name="Lykidis A."/>
            <person name="Richardson P."/>
        </authorList>
    </citation>
    <scope>NUCLEOTIDE SEQUENCE [LARGE SCALE GENOMIC DNA]</scope>
    <source>
        <strain>ATCC 25196 / NCIMB 11849 / C 71</strain>
    </source>
</reference>
<organism>
    <name type="scientific">Nitrosospira multiformis (strain ATCC 25196 / NCIMB 11849 / C 71)</name>
    <dbReference type="NCBI Taxonomy" id="323848"/>
    <lineage>
        <taxon>Bacteria</taxon>
        <taxon>Pseudomonadati</taxon>
        <taxon>Pseudomonadota</taxon>
        <taxon>Betaproteobacteria</taxon>
        <taxon>Nitrosomonadales</taxon>
        <taxon>Nitrosomonadaceae</taxon>
        <taxon>Nitrosospira</taxon>
    </lineage>
</organism>
<evidence type="ECO:0000255" key="1">
    <source>
        <dbReference type="HAMAP-Rule" id="MF_00451"/>
    </source>
</evidence>
<name>NDK_NITMU</name>
<accession>Q2Y6F2</accession>
<gene>
    <name evidence="1" type="primary">ndk</name>
    <name type="ordered locus">Nmul_A2380</name>
</gene>
<proteinExistence type="inferred from homology"/>
<protein>
    <recommendedName>
        <fullName evidence="1">Nucleoside diphosphate kinase</fullName>
        <shortName evidence="1">NDK</shortName>
        <shortName evidence="1">NDP kinase</shortName>
        <ecNumber evidence="1">2.7.4.6</ecNumber>
    </recommendedName>
    <alternativeName>
        <fullName evidence="1">Nucleoside-2-P kinase</fullName>
    </alternativeName>
</protein>